<evidence type="ECO:0000255" key="1">
    <source>
        <dbReference type="HAMAP-Rule" id="MF_00608"/>
    </source>
</evidence>
<dbReference type="EC" id="3.5.4.29" evidence="1"/>
<dbReference type="EMBL" id="CP000561">
    <property type="protein sequence ID" value="ABO08548.1"/>
    <property type="molecule type" value="Genomic_DNA"/>
</dbReference>
<dbReference type="RefSeq" id="WP_011849806.1">
    <property type="nucleotide sequence ID" value="NC_009073.1"/>
</dbReference>
<dbReference type="SMR" id="A3MV81"/>
<dbReference type="STRING" id="410359.Pcal_1123"/>
<dbReference type="GeneID" id="4909917"/>
<dbReference type="KEGG" id="pcl:Pcal_1123"/>
<dbReference type="eggNOG" id="arCOG04202">
    <property type="taxonomic scope" value="Archaea"/>
</dbReference>
<dbReference type="HOGENOM" id="CLU_080076_0_0_2"/>
<dbReference type="OrthoDB" id="25211at2157"/>
<dbReference type="Proteomes" id="UP000001431">
    <property type="component" value="Chromosome"/>
</dbReference>
<dbReference type="GO" id="GO:0005525">
    <property type="term" value="F:GTP binding"/>
    <property type="evidence" value="ECO:0007669"/>
    <property type="project" value="UniProtKB-KW"/>
</dbReference>
<dbReference type="GO" id="GO:0043740">
    <property type="term" value="F:GTP cyclohydrolase IIa activity"/>
    <property type="evidence" value="ECO:0007669"/>
    <property type="project" value="UniProtKB-EC"/>
</dbReference>
<dbReference type="GO" id="GO:0009058">
    <property type="term" value="P:biosynthetic process"/>
    <property type="evidence" value="ECO:0007669"/>
    <property type="project" value="InterPro"/>
</dbReference>
<dbReference type="Gene3D" id="3.30.70.270">
    <property type="match status" value="1"/>
</dbReference>
<dbReference type="Gene3D" id="3.30.70.1230">
    <property type="entry name" value="Nucleotide cyclase"/>
    <property type="match status" value="1"/>
</dbReference>
<dbReference type="HAMAP" id="MF_00608">
    <property type="entry name" value="GTP_cyclohydro_3"/>
    <property type="match status" value="1"/>
</dbReference>
<dbReference type="InterPro" id="IPR007839">
    <property type="entry name" value="GTP_CycHdrlase_3"/>
</dbReference>
<dbReference type="InterPro" id="IPR029787">
    <property type="entry name" value="Nucleotide_cyclase"/>
</dbReference>
<dbReference type="InterPro" id="IPR043128">
    <property type="entry name" value="Rev_trsase/Diguanyl_cyclase"/>
</dbReference>
<dbReference type="PANTHER" id="PTHR42202">
    <property type="entry name" value="GTP CYCLOHYDROLASE III"/>
    <property type="match status" value="1"/>
</dbReference>
<dbReference type="PANTHER" id="PTHR42202:SF1">
    <property type="entry name" value="GTP CYCLOHYDROLASE III"/>
    <property type="match status" value="1"/>
</dbReference>
<dbReference type="Pfam" id="PF05165">
    <property type="entry name" value="GCH_III"/>
    <property type="match status" value="2"/>
</dbReference>
<dbReference type="PIRSF" id="PIRSF009265">
    <property type="entry name" value="GTP_cyclohydro_3"/>
    <property type="match status" value="1"/>
</dbReference>
<protein>
    <recommendedName>
        <fullName evidence="1">GTP cyclohydrolase III</fullName>
        <ecNumber evidence="1">3.5.4.29</ecNumber>
    </recommendedName>
</protein>
<reference key="1">
    <citation type="submission" date="2007-02" db="EMBL/GenBank/DDBJ databases">
        <title>Complete sequence of Pyrobaculum calidifontis JCM 11548.</title>
        <authorList>
            <consortium name="US DOE Joint Genome Institute"/>
            <person name="Copeland A."/>
            <person name="Lucas S."/>
            <person name="Lapidus A."/>
            <person name="Barry K."/>
            <person name="Glavina del Rio T."/>
            <person name="Dalin E."/>
            <person name="Tice H."/>
            <person name="Pitluck S."/>
            <person name="Chain P."/>
            <person name="Malfatti S."/>
            <person name="Shin M."/>
            <person name="Vergez L."/>
            <person name="Schmutz J."/>
            <person name="Larimer F."/>
            <person name="Land M."/>
            <person name="Hauser L."/>
            <person name="Kyrpides N."/>
            <person name="Mikhailova N."/>
            <person name="Cozen A.E."/>
            <person name="Fitz-Gibbon S.T."/>
            <person name="House C.H."/>
            <person name="Saltikov C."/>
            <person name="Lowe T.M."/>
            <person name="Richardson P."/>
        </authorList>
    </citation>
    <scope>NUCLEOTIDE SEQUENCE [LARGE SCALE GENOMIC DNA]</scope>
    <source>
        <strain>DSM 21063 / JCM 11548 / VA1</strain>
    </source>
</reference>
<sequence length="221" mass="24196">MHRVAVVTLRGYREWTESLGPRREHIIQRVQAGLHMALWRHFTSIGAFPHHTRYDAAVALVNNIPTTLIEKAVDKLKKASPVPVEYCIGTGPTPYEAYLSCGEAAGDGDNYAVLAHMDMVDSTHVTRANGPLHVYLQILHIISDLGDLCKRLGCIALYLGGDNVAVLLPEPKAAYEIAERVPVPVRVGVGVAKRPYTAFVKATKALDYLRSHGVVGVKVLK</sequence>
<accession>A3MV81</accession>
<name>GCH3_PYRCJ</name>
<comment type="function">
    <text evidence="1">Catalyzes the formation of 2-amino-5-formylamino-6-ribofuranosylamino-4(3H)-pyrimidinone ribonucleotide monophosphate and inorganic phosphate from GTP. Also has an independent pyrophosphate phosphohydrolase activity.</text>
</comment>
<comment type="catalytic activity">
    <reaction evidence="1">
        <text>GTP + 3 H2O = 2-amino-5-formylamino-6-(5-phospho-D-ribosylamino)pyrimidin-4(3H)-one + 2 phosphate + 2 H(+)</text>
        <dbReference type="Rhea" id="RHEA:22468"/>
        <dbReference type="ChEBI" id="CHEBI:15377"/>
        <dbReference type="ChEBI" id="CHEBI:15378"/>
        <dbReference type="ChEBI" id="CHEBI:37565"/>
        <dbReference type="ChEBI" id="CHEBI:43474"/>
        <dbReference type="ChEBI" id="CHEBI:57258"/>
        <dbReference type="EC" id="3.5.4.29"/>
    </reaction>
</comment>
<comment type="similarity">
    <text evidence="1">Belongs to the archaeal-type GTP cyclohydrolase family.</text>
</comment>
<keyword id="KW-0342">GTP-binding</keyword>
<keyword id="KW-0378">Hydrolase</keyword>
<keyword id="KW-0547">Nucleotide-binding</keyword>
<proteinExistence type="inferred from homology"/>
<feature type="chain" id="PRO_1000147163" description="GTP cyclohydrolase III">
    <location>
        <begin position="1"/>
        <end position="221"/>
    </location>
</feature>
<organism>
    <name type="scientific">Pyrobaculum calidifontis (strain DSM 21063 / JCM 11548 / VA1)</name>
    <dbReference type="NCBI Taxonomy" id="410359"/>
    <lineage>
        <taxon>Archaea</taxon>
        <taxon>Thermoproteota</taxon>
        <taxon>Thermoprotei</taxon>
        <taxon>Thermoproteales</taxon>
        <taxon>Thermoproteaceae</taxon>
        <taxon>Pyrobaculum</taxon>
    </lineage>
</organism>
<gene>
    <name evidence="1" type="primary">gch3</name>
    <name type="ordered locus">Pcal_1123</name>
</gene>